<organism>
    <name type="scientific">Shouchella clausii (strain KSM-K16)</name>
    <name type="common">Alkalihalobacillus clausii</name>
    <dbReference type="NCBI Taxonomy" id="66692"/>
    <lineage>
        <taxon>Bacteria</taxon>
        <taxon>Bacillati</taxon>
        <taxon>Bacillota</taxon>
        <taxon>Bacilli</taxon>
        <taxon>Bacillales</taxon>
        <taxon>Bacillaceae</taxon>
        <taxon>Shouchella</taxon>
    </lineage>
</organism>
<keyword id="KW-0131">Cell cycle</keyword>
<keyword id="KW-0132">Cell division</keyword>
<keyword id="KW-0963">Cytoplasm</keyword>
<keyword id="KW-1185">Reference proteome</keyword>
<keyword id="KW-0717">Septation</keyword>
<dbReference type="EMBL" id="AP006627">
    <property type="protein sequence ID" value="BAD64881.1"/>
    <property type="molecule type" value="Genomic_DNA"/>
</dbReference>
<dbReference type="RefSeq" id="WP_011247189.1">
    <property type="nucleotide sequence ID" value="NC_006582.1"/>
</dbReference>
<dbReference type="SMR" id="Q5WFH9"/>
<dbReference type="STRING" id="66692.ABC2346"/>
<dbReference type="KEGG" id="bcl:ABC2346"/>
<dbReference type="eggNOG" id="COG1799">
    <property type="taxonomic scope" value="Bacteria"/>
</dbReference>
<dbReference type="HOGENOM" id="CLU_078499_4_1_9"/>
<dbReference type="OrthoDB" id="9815206at2"/>
<dbReference type="Proteomes" id="UP000001168">
    <property type="component" value="Chromosome"/>
</dbReference>
<dbReference type="GO" id="GO:0005737">
    <property type="term" value="C:cytoplasm"/>
    <property type="evidence" value="ECO:0007669"/>
    <property type="project" value="UniProtKB-SubCell"/>
</dbReference>
<dbReference type="GO" id="GO:0000917">
    <property type="term" value="P:division septum assembly"/>
    <property type="evidence" value="ECO:0007669"/>
    <property type="project" value="UniProtKB-KW"/>
</dbReference>
<dbReference type="GO" id="GO:0043093">
    <property type="term" value="P:FtsZ-dependent cytokinesis"/>
    <property type="evidence" value="ECO:0007669"/>
    <property type="project" value="UniProtKB-UniRule"/>
</dbReference>
<dbReference type="Gene3D" id="3.30.110.150">
    <property type="entry name" value="SepF-like protein"/>
    <property type="match status" value="1"/>
</dbReference>
<dbReference type="HAMAP" id="MF_01197">
    <property type="entry name" value="SepF"/>
    <property type="match status" value="1"/>
</dbReference>
<dbReference type="InterPro" id="IPR023052">
    <property type="entry name" value="Cell_div_SepF"/>
</dbReference>
<dbReference type="InterPro" id="IPR007561">
    <property type="entry name" value="Cell_div_SepF/SepF-rel"/>
</dbReference>
<dbReference type="InterPro" id="IPR038594">
    <property type="entry name" value="SepF-like_sf"/>
</dbReference>
<dbReference type="PANTHER" id="PTHR35798">
    <property type="entry name" value="CELL DIVISION PROTEIN SEPF"/>
    <property type="match status" value="1"/>
</dbReference>
<dbReference type="PANTHER" id="PTHR35798:SF1">
    <property type="entry name" value="CELL DIVISION PROTEIN SEPF"/>
    <property type="match status" value="1"/>
</dbReference>
<dbReference type="Pfam" id="PF04472">
    <property type="entry name" value="SepF"/>
    <property type="match status" value="1"/>
</dbReference>
<sequence length="155" mass="17708">MGFKTKFKRYFNLDDHVEEVERYVEEPEQRDERPALEKGRAPKEKQTAGMEQNQNIVSLQSVQKSAKMILLEPRSYDEAQDIADHLKRRKAVVINLLRIEQEQALRIVDFLSGTVYAIGGDIQKIGPGIFLCTPDNVEITGSISDWVTRQTDSTV</sequence>
<evidence type="ECO:0000255" key="1">
    <source>
        <dbReference type="HAMAP-Rule" id="MF_01197"/>
    </source>
</evidence>
<evidence type="ECO:0000256" key="2">
    <source>
        <dbReference type="SAM" id="MobiDB-lite"/>
    </source>
</evidence>
<proteinExistence type="inferred from homology"/>
<accession>Q5WFH9</accession>
<gene>
    <name evidence="1" type="primary">sepF</name>
    <name type="ordered locus">ABC2346</name>
</gene>
<protein>
    <recommendedName>
        <fullName evidence="1">Cell division protein SepF</fullName>
    </recommendedName>
</protein>
<feature type="chain" id="PRO_0000333980" description="Cell division protein SepF">
    <location>
        <begin position="1"/>
        <end position="155"/>
    </location>
</feature>
<feature type="region of interest" description="Disordered" evidence="2">
    <location>
        <begin position="22"/>
        <end position="54"/>
    </location>
</feature>
<feature type="compositionally biased region" description="Basic and acidic residues" evidence="2">
    <location>
        <begin position="22"/>
        <end position="46"/>
    </location>
</feature>
<name>SEPF_SHOC1</name>
<reference key="1">
    <citation type="submission" date="2003-10" db="EMBL/GenBank/DDBJ databases">
        <title>The complete genome sequence of the alkaliphilic Bacillus clausii KSM-K16.</title>
        <authorList>
            <person name="Takaki Y."/>
            <person name="Kageyama Y."/>
            <person name="Shimamura S."/>
            <person name="Suzuki H."/>
            <person name="Nishi S."/>
            <person name="Hatada Y."/>
            <person name="Kawai S."/>
            <person name="Ito S."/>
            <person name="Horikoshi K."/>
        </authorList>
    </citation>
    <scope>NUCLEOTIDE SEQUENCE [LARGE SCALE GENOMIC DNA]</scope>
    <source>
        <strain>KSM-K16</strain>
    </source>
</reference>
<comment type="function">
    <text evidence="1">Cell division protein that is part of the divisome complex and is recruited early to the Z-ring. Probably stimulates Z-ring formation, perhaps through the cross-linking of FtsZ protofilaments. Its function overlaps with FtsA.</text>
</comment>
<comment type="subunit">
    <text evidence="1">Homodimer. Interacts with FtsZ.</text>
</comment>
<comment type="subcellular location">
    <subcellularLocation>
        <location evidence="1">Cytoplasm</location>
    </subcellularLocation>
    <text evidence="1">Localizes to the division site, in a FtsZ-dependent manner.</text>
</comment>
<comment type="similarity">
    <text evidence="1">Belongs to the SepF family.</text>
</comment>